<reference key="1">
    <citation type="submission" date="2006-10" db="EMBL/GenBank/DDBJ databases">
        <title>Complete sequence of Syntrophobacter fumaroxidans MPOB.</title>
        <authorList>
            <consortium name="US DOE Joint Genome Institute"/>
            <person name="Copeland A."/>
            <person name="Lucas S."/>
            <person name="Lapidus A."/>
            <person name="Barry K."/>
            <person name="Detter J.C."/>
            <person name="Glavina del Rio T."/>
            <person name="Hammon N."/>
            <person name="Israni S."/>
            <person name="Pitluck S."/>
            <person name="Goltsman E.G."/>
            <person name="Martinez M."/>
            <person name="Schmutz J."/>
            <person name="Larimer F."/>
            <person name="Land M."/>
            <person name="Hauser L."/>
            <person name="Kyrpides N."/>
            <person name="Kim E."/>
            <person name="Boone D.R."/>
            <person name="Brockman F."/>
            <person name="Culley D."/>
            <person name="Ferry J."/>
            <person name="Gunsalus R."/>
            <person name="McInerney M.J."/>
            <person name="Morrison M."/>
            <person name="Plugge C."/>
            <person name="Rohlin L."/>
            <person name="Scholten J."/>
            <person name="Sieber J."/>
            <person name="Stams A.J.M."/>
            <person name="Worm P."/>
            <person name="Henstra A.M."/>
            <person name="Richardson P."/>
        </authorList>
    </citation>
    <scope>NUCLEOTIDE SEQUENCE [LARGE SCALE GENOMIC DNA]</scope>
    <source>
        <strain>DSM 10017 / MPOB</strain>
    </source>
</reference>
<comment type="catalytic activity">
    <reaction evidence="1">
        <text>L-citrulline + L-aspartate + ATP = 2-(N(omega)-L-arginino)succinate + AMP + diphosphate + H(+)</text>
        <dbReference type="Rhea" id="RHEA:10932"/>
        <dbReference type="ChEBI" id="CHEBI:15378"/>
        <dbReference type="ChEBI" id="CHEBI:29991"/>
        <dbReference type="ChEBI" id="CHEBI:30616"/>
        <dbReference type="ChEBI" id="CHEBI:33019"/>
        <dbReference type="ChEBI" id="CHEBI:57472"/>
        <dbReference type="ChEBI" id="CHEBI:57743"/>
        <dbReference type="ChEBI" id="CHEBI:456215"/>
        <dbReference type="EC" id="6.3.4.5"/>
    </reaction>
</comment>
<comment type="pathway">
    <text evidence="1">Amino-acid biosynthesis; L-arginine biosynthesis; L-arginine from L-ornithine and carbamoyl phosphate: step 2/3.</text>
</comment>
<comment type="subunit">
    <text evidence="1">Homotetramer.</text>
</comment>
<comment type="subcellular location">
    <subcellularLocation>
        <location evidence="1">Cytoplasm</location>
    </subcellularLocation>
</comment>
<comment type="similarity">
    <text evidence="1">Belongs to the argininosuccinate synthase family. Type 1 subfamily.</text>
</comment>
<protein>
    <recommendedName>
        <fullName evidence="1">Argininosuccinate synthase</fullName>
        <ecNumber evidence="1">6.3.4.5</ecNumber>
    </recommendedName>
    <alternativeName>
        <fullName evidence="1">Citrulline--aspartate ligase</fullName>
    </alternativeName>
</protein>
<keyword id="KW-0028">Amino-acid biosynthesis</keyword>
<keyword id="KW-0055">Arginine biosynthesis</keyword>
<keyword id="KW-0067">ATP-binding</keyword>
<keyword id="KW-0963">Cytoplasm</keyword>
<keyword id="KW-0436">Ligase</keyword>
<keyword id="KW-0547">Nucleotide-binding</keyword>
<keyword id="KW-1185">Reference proteome</keyword>
<gene>
    <name evidence="1" type="primary">argG</name>
    <name type="ordered locus">Sfum_0061</name>
</gene>
<proteinExistence type="inferred from homology"/>
<accession>A0LEB2</accession>
<sequence>MDVKKVVLAYSGGLDTSIILKWLIESYGCEVVAFSADLGQAEELDGLEAKALATGAVKARIVDLREEFVRDFVFPAFRANAIYEGQYLLGTSIARPLIAKAQIRIAEEEDADAVSHGATGKGNDQVRFELTYIALNPAIKIIAPWREWDLKSRSDLVEFARRHGIPIPVTKEKPYSSDRNMLHISYEGGILEDPWLEPDPAMFTLSVAPEEAPDAPEFVEIDFERGNPVAVNGERLSPAQLLTRLNALGGRHGIGRVDLVESRFVGMKSRGVYETPGGTIMRTAHHAVESVTMDRELMFLRDSLVPQYSRLIYNGFWYSPEMRLLQNTMDLAQENVYGTAKLKLYKGNCVVIGRRSDRSLYQPSFATFEEDDVYRQDDATGFIRLHGLRLQIESLVRGKSR</sequence>
<organism>
    <name type="scientific">Syntrophobacter fumaroxidans (strain DSM 10017 / MPOB)</name>
    <dbReference type="NCBI Taxonomy" id="335543"/>
    <lineage>
        <taxon>Bacteria</taxon>
        <taxon>Pseudomonadati</taxon>
        <taxon>Thermodesulfobacteriota</taxon>
        <taxon>Syntrophobacteria</taxon>
        <taxon>Syntrophobacterales</taxon>
        <taxon>Syntrophobacteraceae</taxon>
        <taxon>Syntrophobacter</taxon>
    </lineage>
</organism>
<evidence type="ECO:0000255" key="1">
    <source>
        <dbReference type="HAMAP-Rule" id="MF_00005"/>
    </source>
</evidence>
<name>ASSY_SYNFM</name>
<feature type="chain" id="PRO_1000000443" description="Argininosuccinate synthase">
    <location>
        <begin position="1"/>
        <end position="401"/>
    </location>
</feature>
<feature type="binding site" evidence="1">
    <location>
        <begin position="9"/>
        <end position="17"/>
    </location>
    <ligand>
        <name>ATP</name>
        <dbReference type="ChEBI" id="CHEBI:30616"/>
    </ligand>
</feature>
<feature type="binding site" evidence="1">
    <location>
        <position position="36"/>
    </location>
    <ligand>
        <name>ATP</name>
        <dbReference type="ChEBI" id="CHEBI:30616"/>
    </ligand>
</feature>
<feature type="binding site" evidence="1">
    <location>
        <position position="87"/>
    </location>
    <ligand>
        <name>L-citrulline</name>
        <dbReference type="ChEBI" id="CHEBI:57743"/>
    </ligand>
</feature>
<feature type="binding site" evidence="1">
    <location>
        <position position="92"/>
    </location>
    <ligand>
        <name>L-citrulline</name>
        <dbReference type="ChEBI" id="CHEBI:57743"/>
    </ligand>
</feature>
<feature type="binding site" evidence="1">
    <location>
        <position position="117"/>
    </location>
    <ligand>
        <name>ATP</name>
        <dbReference type="ChEBI" id="CHEBI:30616"/>
    </ligand>
</feature>
<feature type="binding site" evidence="1">
    <location>
        <position position="119"/>
    </location>
    <ligand>
        <name>L-aspartate</name>
        <dbReference type="ChEBI" id="CHEBI:29991"/>
    </ligand>
</feature>
<feature type="binding site" evidence="1">
    <location>
        <position position="123"/>
    </location>
    <ligand>
        <name>L-aspartate</name>
        <dbReference type="ChEBI" id="CHEBI:29991"/>
    </ligand>
</feature>
<feature type="binding site" evidence="1">
    <location>
        <position position="123"/>
    </location>
    <ligand>
        <name>L-citrulline</name>
        <dbReference type="ChEBI" id="CHEBI:57743"/>
    </ligand>
</feature>
<feature type="binding site" evidence="1">
    <location>
        <position position="124"/>
    </location>
    <ligand>
        <name>L-aspartate</name>
        <dbReference type="ChEBI" id="CHEBI:29991"/>
    </ligand>
</feature>
<feature type="binding site" evidence="1">
    <location>
        <position position="127"/>
    </location>
    <ligand>
        <name>L-citrulline</name>
        <dbReference type="ChEBI" id="CHEBI:57743"/>
    </ligand>
</feature>
<feature type="binding site" evidence="1">
    <location>
        <position position="176"/>
    </location>
    <ligand>
        <name>L-citrulline</name>
        <dbReference type="ChEBI" id="CHEBI:57743"/>
    </ligand>
</feature>
<feature type="binding site" evidence="1">
    <location>
        <position position="185"/>
    </location>
    <ligand>
        <name>L-citrulline</name>
        <dbReference type="ChEBI" id="CHEBI:57743"/>
    </ligand>
</feature>
<feature type="binding site" evidence="1">
    <location>
        <position position="261"/>
    </location>
    <ligand>
        <name>L-citrulline</name>
        <dbReference type="ChEBI" id="CHEBI:57743"/>
    </ligand>
</feature>
<feature type="binding site" evidence="1">
    <location>
        <position position="273"/>
    </location>
    <ligand>
        <name>L-citrulline</name>
        <dbReference type="ChEBI" id="CHEBI:57743"/>
    </ligand>
</feature>
<dbReference type="EC" id="6.3.4.5" evidence="1"/>
<dbReference type="EMBL" id="CP000478">
    <property type="protein sequence ID" value="ABK15764.1"/>
    <property type="molecule type" value="Genomic_DNA"/>
</dbReference>
<dbReference type="RefSeq" id="WP_011696937.1">
    <property type="nucleotide sequence ID" value="NC_008554.1"/>
</dbReference>
<dbReference type="SMR" id="A0LEB2"/>
<dbReference type="FunCoup" id="A0LEB2">
    <property type="interactions" value="492"/>
</dbReference>
<dbReference type="STRING" id="335543.Sfum_0061"/>
<dbReference type="KEGG" id="sfu:Sfum_0061"/>
<dbReference type="eggNOG" id="COG0137">
    <property type="taxonomic scope" value="Bacteria"/>
</dbReference>
<dbReference type="HOGENOM" id="CLU_032784_4_2_7"/>
<dbReference type="InParanoid" id="A0LEB2"/>
<dbReference type="OrthoDB" id="9801641at2"/>
<dbReference type="UniPathway" id="UPA00068">
    <property type="reaction ID" value="UER00113"/>
</dbReference>
<dbReference type="Proteomes" id="UP000001784">
    <property type="component" value="Chromosome"/>
</dbReference>
<dbReference type="GO" id="GO:0005737">
    <property type="term" value="C:cytoplasm"/>
    <property type="evidence" value="ECO:0007669"/>
    <property type="project" value="UniProtKB-SubCell"/>
</dbReference>
<dbReference type="GO" id="GO:0004055">
    <property type="term" value="F:argininosuccinate synthase activity"/>
    <property type="evidence" value="ECO:0007669"/>
    <property type="project" value="UniProtKB-UniRule"/>
</dbReference>
<dbReference type="GO" id="GO:0005524">
    <property type="term" value="F:ATP binding"/>
    <property type="evidence" value="ECO:0007669"/>
    <property type="project" value="UniProtKB-UniRule"/>
</dbReference>
<dbReference type="GO" id="GO:0000053">
    <property type="term" value="P:argininosuccinate metabolic process"/>
    <property type="evidence" value="ECO:0007669"/>
    <property type="project" value="TreeGrafter"/>
</dbReference>
<dbReference type="GO" id="GO:0006526">
    <property type="term" value="P:L-arginine biosynthetic process"/>
    <property type="evidence" value="ECO:0007669"/>
    <property type="project" value="UniProtKB-UniRule"/>
</dbReference>
<dbReference type="GO" id="GO:0000050">
    <property type="term" value="P:urea cycle"/>
    <property type="evidence" value="ECO:0007669"/>
    <property type="project" value="TreeGrafter"/>
</dbReference>
<dbReference type="CDD" id="cd01999">
    <property type="entry name" value="ASS"/>
    <property type="match status" value="1"/>
</dbReference>
<dbReference type="FunFam" id="3.40.50.620:FF:000019">
    <property type="entry name" value="Argininosuccinate synthase"/>
    <property type="match status" value="1"/>
</dbReference>
<dbReference type="FunFam" id="3.90.1260.10:FF:000007">
    <property type="entry name" value="Argininosuccinate synthase"/>
    <property type="match status" value="1"/>
</dbReference>
<dbReference type="Gene3D" id="3.90.1260.10">
    <property type="entry name" value="Argininosuccinate synthetase, chain A, domain 2"/>
    <property type="match status" value="1"/>
</dbReference>
<dbReference type="Gene3D" id="3.40.50.620">
    <property type="entry name" value="HUPs"/>
    <property type="match status" value="1"/>
</dbReference>
<dbReference type="Gene3D" id="1.20.5.470">
    <property type="entry name" value="Single helix bin"/>
    <property type="match status" value="1"/>
</dbReference>
<dbReference type="HAMAP" id="MF_00005">
    <property type="entry name" value="Arg_succ_synth_type1"/>
    <property type="match status" value="1"/>
</dbReference>
<dbReference type="InterPro" id="IPR048268">
    <property type="entry name" value="Arginosuc_syn_C"/>
</dbReference>
<dbReference type="InterPro" id="IPR048267">
    <property type="entry name" value="Arginosuc_syn_N"/>
</dbReference>
<dbReference type="InterPro" id="IPR001518">
    <property type="entry name" value="Arginosuc_synth"/>
</dbReference>
<dbReference type="InterPro" id="IPR018223">
    <property type="entry name" value="Arginosuc_synth_CS"/>
</dbReference>
<dbReference type="InterPro" id="IPR023434">
    <property type="entry name" value="Arginosuc_synth_type_1_subfam"/>
</dbReference>
<dbReference type="InterPro" id="IPR024074">
    <property type="entry name" value="AS_cat/multimer_dom_body"/>
</dbReference>
<dbReference type="InterPro" id="IPR014729">
    <property type="entry name" value="Rossmann-like_a/b/a_fold"/>
</dbReference>
<dbReference type="NCBIfam" id="TIGR00032">
    <property type="entry name" value="argG"/>
    <property type="match status" value="1"/>
</dbReference>
<dbReference type="NCBIfam" id="NF001770">
    <property type="entry name" value="PRK00509.1"/>
    <property type="match status" value="1"/>
</dbReference>
<dbReference type="PANTHER" id="PTHR11587">
    <property type="entry name" value="ARGININOSUCCINATE SYNTHASE"/>
    <property type="match status" value="1"/>
</dbReference>
<dbReference type="PANTHER" id="PTHR11587:SF2">
    <property type="entry name" value="ARGININOSUCCINATE SYNTHASE"/>
    <property type="match status" value="1"/>
</dbReference>
<dbReference type="Pfam" id="PF20979">
    <property type="entry name" value="Arginosuc_syn_C"/>
    <property type="match status" value="1"/>
</dbReference>
<dbReference type="Pfam" id="PF00764">
    <property type="entry name" value="Arginosuc_synth"/>
    <property type="match status" value="1"/>
</dbReference>
<dbReference type="SUPFAM" id="SSF52402">
    <property type="entry name" value="Adenine nucleotide alpha hydrolases-like"/>
    <property type="match status" value="1"/>
</dbReference>
<dbReference type="SUPFAM" id="SSF69864">
    <property type="entry name" value="Argininosuccinate synthetase, C-terminal domain"/>
    <property type="match status" value="1"/>
</dbReference>
<dbReference type="PROSITE" id="PS00564">
    <property type="entry name" value="ARGININOSUCCIN_SYN_1"/>
    <property type="match status" value="1"/>
</dbReference>
<dbReference type="PROSITE" id="PS00565">
    <property type="entry name" value="ARGININOSUCCIN_SYN_2"/>
    <property type="match status" value="1"/>
</dbReference>